<organism>
    <name type="scientific">Arabidopsis thaliana</name>
    <name type="common">Mouse-ear cress</name>
    <dbReference type="NCBI Taxonomy" id="3702"/>
    <lineage>
        <taxon>Eukaryota</taxon>
        <taxon>Viridiplantae</taxon>
        <taxon>Streptophyta</taxon>
        <taxon>Embryophyta</taxon>
        <taxon>Tracheophyta</taxon>
        <taxon>Spermatophyta</taxon>
        <taxon>Magnoliopsida</taxon>
        <taxon>eudicotyledons</taxon>
        <taxon>Gunneridae</taxon>
        <taxon>Pentapetalae</taxon>
        <taxon>rosids</taxon>
        <taxon>malvids</taxon>
        <taxon>Brassicales</taxon>
        <taxon>Brassicaceae</taxon>
        <taxon>Camelineae</taxon>
        <taxon>Arabidopsis</taxon>
    </lineage>
</organism>
<evidence type="ECO:0000256" key="1">
    <source>
        <dbReference type="SAM" id="MobiDB-lite"/>
    </source>
</evidence>
<evidence type="ECO:0000303" key="2">
    <source>
    </source>
</evidence>
<evidence type="ECO:0000305" key="3"/>
<accession>Q9SF40</accession>
<proteinExistence type="evidence at protein level"/>
<gene>
    <name type="primary">RPL4A</name>
    <name type="ordered locus">At3g09630</name>
    <name type="ORF">F11F8.22</name>
</gene>
<protein>
    <recommendedName>
        <fullName evidence="2">Large ribosomal subunit protein uL4z</fullName>
    </recommendedName>
    <alternativeName>
        <fullName>60S ribosomal protein L4-1</fullName>
        <shortName>L1</shortName>
    </alternativeName>
</protein>
<sequence>MAAAAARPLVTIQTLDGDMSTDQSSTVVLPDVMTAPVRPDIVNFVHAQISNNSRQPYAVSKKAGHQTSAESWGTGRAVSRIPRVPGGGTHRAGQAAFGNMCRGGRMFAPTKIWRRWHRRVNVNMKRHAIVSAIAATAVPALVMARGHKIENVPEMPLVVSDSAEAVEKTSAAIKVLKQIGAYDDAEKAKNSIGIRPGKGKMRNRRYISRKGPLVVYGTEGSKIVKAFRNLPGVELCHVERLNLLKLAPGGHLGRFVIWTKSAFEKLESIYGSFEKPSEKKKGYVLPRAKMVNADLARIINSDEIQSVVNPIKKDAKRAVLKKNPLKNLNVMLKLNPYAKTAKRMSLLAEAQRVKAKKEKLAKKRKTVTKEEALAIKAAGKSWYKTMISDSDYTEFDNFTKWLGASQ</sequence>
<keyword id="KW-0025">Alternative splicing</keyword>
<keyword id="KW-1185">Reference proteome</keyword>
<keyword id="KW-0687">Ribonucleoprotein</keyword>
<keyword id="KW-0689">Ribosomal protein</keyword>
<reference key="1">
    <citation type="journal article" date="2000" name="Nature">
        <title>Sequence and analysis of chromosome 3 of the plant Arabidopsis thaliana.</title>
        <authorList>
            <person name="Salanoubat M."/>
            <person name="Lemcke K."/>
            <person name="Rieger M."/>
            <person name="Ansorge W."/>
            <person name="Unseld M."/>
            <person name="Fartmann B."/>
            <person name="Valle G."/>
            <person name="Bloecker H."/>
            <person name="Perez-Alonso M."/>
            <person name="Obermaier B."/>
            <person name="Delseny M."/>
            <person name="Boutry M."/>
            <person name="Grivell L.A."/>
            <person name="Mache R."/>
            <person name="Puigdomenech P."/>
            <person name="De Simone V."/>
            <person name="Choisne N."/>
            <person name="Artiguenave F."/>
            <person name="Robert C."/>
            <person name="Brottier P."/>
            <person name="Wincker P."/>
            <person name="Cattolico L."/>
            <person name="Weissenbach J."/>
            <person name="Saurin W."/>
            <person name="Quetier F."/>
            <person name="Schaefer M."/>
            <person name="Mueller-Auer S."/>
            <person name="Gabel C."/>
            <person name="Fuchs M."/>
            <person name="Benes V."/>
            <person name="Wurmbach E."/>
            <person name="Drzonek H."/>
            <person name="Erfle H."/>
            <person name="Jordan N."/>
            <person name="Bangert S."/>
            <person name="Wiedelmann R."/>
            <person name="Kranz H."/>
            <person name="Voss H."/>
            <person name="Holland R."/>
            <person name="Brandt P."/>
            <person name="Nyakatura G."/>
            <person name="Vezzi A."/>
            <person name="D'Angelo M."/>
            <person name="Pallavicini A."/>
            <person name="Toppo S."/>
            <person name="Simionati B."/>
            <person name="Conrad A."/>
            <person name="Hornischer K."/>
            <person name="Kauer G."/>
            <person name="Loehnert T.-H."/>
            <person name="Nordsiek G."/>
            <person name="Reichelt J."/>
            <person name="Scharfe M."/>
            <person name="Schoen O."/>
            <person name="Bargues M."/>
            <person name="Terol J."/>
            <person name="Climent J."/>
            <person name="Navarro P."/>
            <person name="Collado C."/>
            <person name="Perez-Perez A."/>
            <person name="Ottenwaelder B."/>
            <person name="Duchemin D."/>
            <person name="Cooke R."/>
            <person name="Laudie M."/>
            <person name="Berger-Llauro C."/>
            <person name="Purnelle B."/>
            <person name="Masuy D."/>
            <person name="de Haan M."/>
            <person name="Maarse A.C."/>
            <person name="Alcaraz J.-P."/>
            <person name="Cottet A."/>
            <person name="Casacuberta E."/>
            <person name="Monfort A."/>
            <person name="Argiriou A."/>
            <person name="Flores M."/>
            <person name="Liguori R."/>
            <person name="Vitale D."/>
            <person name="Mannhaupt G."/>
            <person name="Haase D."/>
            <person name="Schoof H."/>
            <person name="Rudd S."/>
            <person name="Zaccaria P."/>
            <person name="Mewes H.-W."/>
            <person name="Mayer K.F.X."/>
            <person name="Kaul S."/>
            <person name="Town C.D."/>
            <person name="Koo H.L."/>
            <person name="Tallon L.J."/>
            <person name="Jenkins J."/>
            <person name="Rooney T."/>
            <person name="Rizzo M."/>
            <person name="Walts A."/>
            <person name="Utterback T."/>
            <person name="Fujii C.Y."/>
            <person name="Shea T.P."/>
            <person name="Creasy T.H."/>
            <person name="Haas B."/>
            <person name="Maiti R."/>
            <person name="Wu D."/>
            <person name="Peterson J."/>
            <person name="Van Aken S."/>
            <person name="Pai G."/>
            <person name="Militscher J."/>
            <person name="Sellers P."/>
            <person name="Gill J.E."/>
            <person name="Feldblyum T.V."/>
            <person name="Preuss D."/>
            <person name="Lin X."/>
            <person name="Nierman W.C."/>
            <person name="Salzberg S.L."/>
            <person name="White O."/>
            <person name="Venter J.C."/>
            <person name="Fraser C.M."/>
            <person name="Kaneko T."/>
            <person name="Nakamura Y."/>
            <person name="Sato S."/>
            <person name="Kato T."/>
            <person name="Asamizu E."/>
            <person name="Sasamoto S."/>
            <person name="Kimura T."/>
            <person name="Idesawa K."/>
            <person name="Kawashima K."/>
            <person name="Kishida Y."/>
            <person name="Kiyokawa C."/>
            <person name="Kohara M."/>
            <person name="Matsumoto M."/>
            <person name="Matsuno A."/>
            <person name="Muraki A."/>
            <person name="Nakayama S."/>
            <person name="Nakazaki N."/>
            <person name="Shinpo S."/>
            <person name="Takeuchi C."/>
            <person name="Wada T."/>
            <person name="Watanabe A."/>
            <person name="Yamada M."/>
            <person name="Yasuda M."/>
            <person name="Tabata S."/>
        </authorList>
    </citation>
    <scope>NUCLEOTIDE SEQUENCE [LARGE SCALE GENOMIC DNA]</scope>
    <source>
        <strain>cv. Columbia</strain>
    </source>
</reference>
<reference key="2">
    <citation type="journal article" date="2017" name="Plant J.">
        <title>Araport11: a complete reannotation of the Arabidopsis thaliana reference genome.</title>
        <authorList>
            <person name="Cheng C.Y."/>
            <person name="Krishnakumar V."/>
            <person name="Chan A.P."/>
            <person name="Thibaud-Nissen F."/>
            <person name="Schobel S."/>
            <person name="Town C.D."/>
        </authorList>
    </citation>
    <scope>GENOME REANNOTATION</scope>
    <source>
        <strain>cv. Columbia</strain>
    </source>
</reference>
<reference key="3">
    <citation type="journal article" date="2003" name="Science">
        <title>Empirical analysis of transcriptional activity in the Arabidopsis genome.</title>
        <authorList>
            <person name="Yamada K."/>
            <person name="Lim J."/>
            <person name="Dale J.M."/>
            <person name="Chen H."/>
            <person name="Shinn P."/>
            <person name="Palm C.J."/>
            <person name="Southwick A.M."/>
            <person name="Wu H.C."/>
            <person name="Kim C.J."/>
            <person name="Nguyen M."/>
            <person name="Pham P.K."/>
            <person name="Cheuk R.F."/>
            <person name="Karlin-Newmann G."/>
            <person name="Liu S.X."/>
            <person name="Lam B."/>
            <person name="Sakano H."/>
            <person name="Wu T."/>
            <person name="Yu G."/>
            <person name="Miranda M."/>
            <person name="Quach H.L."/>
            <person name="Tripp M."/>
            <person name="Chang C.H."/>
            <person name="Lee J.M."/>
            <person name="Toriumi M.J."/>
            <person name="Chan M.M."/>
            <person name="Tang C.C."/>
            <person name="Onodera C.S."/>
            <person name="Deng J.M."/>
            <person name="Akiyama K."/>
            <person name="Ansari Y."/>
            <person name="Arakawa T."/>
            <person name="Banh J."/>
            <person name="Banno F."/>
            <person name="Bowser L."/>
            <person name="Brooks S.Y."/>
            <person name="Carninci P."/>
            <person name="Chao Q."/>
            <person name="Choy N."/>
            <person name="Enju A."/>
            <person name="Goldsmith A.D."/>
            <person name="Gurjal M."/>
            <person name="Hansen N.F."/>
            <person name="Hayashizaki Y."/>
            <person name="Johnson-Hopson C."/>
            <person name="Hsuan V.W."/>
            <person name="Iida K."/>
            <person name="Karnes M."/>
            <person name="Khan S."/>
            <person name="Koesema E."/>
            <person name="Ishida J."/>
            <person name="Jiang P.X."/>
            <person name="Jones T."/>
            <person name="Kawai J."/>
            <person name="Kamiya A."/>
            <person name="Meyers C."/>
            <person name="Nakajima M."/>
            <person name="Narusaka M."/>
            <person name="Seki M."/>
            <person name="Sakurai T."/>
            <person name="Satou M."/>
            <person name="Tamse R."/>
            <person name="Vaysberg M."/>
            <person name="Wallender E.K."/>
            <person name="Wong C."/>
            <person name="Yamamura Y."/>
            <person name="Yuan S."/>
            <person name="Shinozaki K."/>
            <person name="Davis R.W."/>
            <person name="Theologis A."/>
            <person name="Ecker J.R."/>
        </authorList>
    </citation>
    <scope>NUCLEOTIDE SEQUENCE [LARGE SCALE MRNA]</scope>
    <source>
        <strain>cv. Columbia</strain>
    </source>
</reference>
<reference key="4">
    <citation type="journal article" date="2001" name="Plant Physiol.">
        <title>The organization of cytoplasmic ribosomal protein genes in the Arabidopsis genome.</title>
        <authorList>
            <person name="Barakat A."/>
            <person name="Szick-Miranda K."/>
            <person name="Chang I.-F."/>
            <person name="Guyot R."/>
            <person name="Blanc G."/>
            <person name="Cooke R."/>
            <person name="Delseny M."/>
            <person name="Bailey-Serres J."/>
        </authorList>
    </citation>
    <scope>GENE FAMILY ORGANIZATION</scope>
    <scope>NOMENCLATURE</scope>
</reference>
<reference key="5">
    <citation type="journal article" date="2007" name="Mol. Cell. Proteomics">
        <title>Multidimensional protein identification technology (MudPIT) analysis of ubiquitinated proteins in plants.</title>
        <authorList>
            <person name="Maor R."/>
            <person name="Jones A."/>
            <person name="Nuehse T.S."/>
            <person name="Studholme D.J."/>
            <person name="Peck S.C."/>
            <person name="Shirasu K."/>
        </authorList>
    </citation>
    <scope>IDENTIFICATION BY MASS SPECTROMETRY [LARGE SCALE ANALYSIS]</scope>
    <source>
        <strain>cv. Landsberg erecta</strain>
    </source>
</reference>
<reference key="6">
    <citation type="journal article" date="2023" name="Plant Cell">
        <title>An updated nomenclature for plant ribosomal protein genes.</title>
        <authorList>
            <person name="Scarpin M.R."/>
            <person name="Busche M."/>
            <person name="Martinez R.E."/>
            <person name="Harper L.C."/>
            <person name="Reiser L."/>
            <person name="Szakonyi D."/>
            <person name="Merchante C."/>
            <person name="Lan T."/>
            <person name="Xiong W."/>
            <person name="Mo B."/>
            <person name="Tang G."/>
            <person name="Chen X."/>
            <person name="Bailey-Serres J."/>
            <person name="Browning K.S."/>
            <person name="Brunkard J.O."/>
        </authorList>
    </citation>
    <scope>NOMENCLATURE</scope>
</reference>
<dbReference type="EMBL" id="AC016661">
    <property type="protein sequence ID" value="AAF23293.1"/>
    <property type="molecule type" value="Genomic_DNA"/>
</dbReference>
<dbReference type="EMBL" id="CP002686">
    <property type="protein sequence ID" value="AEE74789.1"/>
    <property type="molecule type" value="Genomic_DNA"/>
</dbReference>
<dbReference type="EMBL" id="AY056781">
    <property type="protein sequence ID" value="AAL09727.1"/>
    <property type="molecule type" value="mRNA"/>
</dbReference>
<dbReference type="EMBL" id="BT002438">
    <property type="protein sequence ID" value="AAO00798.1"/>
    <property type="molecule type" value="mRNA"/>
</dbReference>
<dbReference type="EMBL" id="BT008495">
    <property type="protein sequence ID" value="AAP37854.1"/>
    <property type="molecule type" value="mRNA"/>
</dbReference>
<dbReference type="RefSeq" id="NP_187574.1">
    <molecule id="Q9SF40-1"/>
    <property type="nucleotide sequence ID" value="NM_111797.3"/>
</dbReference>
<dbReference type="SMR" id="Q9SF40"/>
<dbReference type="BioGRID" id="5454">
    <property type="interactions" value="180"/>
</dbReference>
<dbReference type="FunCoup" id="Q9SF40">
    <property type="interactions" value="3553"/>
</dbReference>
<dbReference type="IntAct" id="Q9SF40">
    <property type="interactions" value="9"/>
</dbReference>
<dbReference type="STRING" id="3702.Q9SF40"/>
<dbReference type="iPTMnet" id="Q9SF40"/>
<dbReference type="MetOSite" id="Q9SF40"/>
<dbReference type="PaxDb" id="3702-AT3G09630.1"/>
<dbReference type="ProteomicsDB" id="226847">
    <molecule id="Q9SF40-1"/>
</dbReference>
<dbReference type="EnsemblPlants" id="AT3G09630.1">
    <molecule id="Q9SF40-1"/>
    <property type="protein sequence ID" value="AT3G09630.1"/>
    <property type="gene ID" value="AT3G09630"/>
</dbReference>
<dbReference type="GeneID" id="820120"/>
<dbReference type="Gramene" id="AT3G09630.1">
    <molecule id="Q9SF40-1"/>
    <property type="protein sequence ID" value="AT3G09630.1"/>
    <property type="gene ID" value="AT3G09630"/>
</dbReference>
<dbReference type="KEGG" id="ath:AT3G09630"/>
<dbReference type="Araport" id="AT3G09630"/>
<dbReference type="TAIR" id="AT3G09630">
    <property type="gene designation" value="SAC56"/>
</dbReference>
<dbReference type="eggNOG" id="KOG1475">
    <property type="taxonomic scope" value="Eukaryota"/>
</dbReference>
<dbReference type="HOGENOM" id="CLU_026535_3_0_1"/>
<dbReference type="InParanoid" id="Q9SF40"/>
<dbReference type="OMA" id="SKCAGHQ"/>
<dbReference type="OrthoDB" id="10259785at2759"/>
<dbReference type="PhylomeDB" id="Q9SF40"/>
<dbReference type="CD-CODE" id="4299E36E">
    <property type="entry name" value="Nucleolus"/>
</dbReference>
<dbReference type="PRO" id="PR:Q9SF40"/>
<dbReference type="Proteomes" id="UP000006548">
    <property type="component" value="Chromosome 3"/>
</dbReference>
<dbReference type="ExpressionAtlas" id="Q9SF40">
    <property type="expression patterns" value="baseline and differential"/>
</dbReference>
<dbReference type="GO" id="GO:0005829">
    <property type="term" value="C:cytosol"/>
    <property type="evidence" value="ECO:0007005"/>
    <property type="project" value="TAIR"/>
</dbReference>
<dbReference type="GO" id="GO:0022625">
    <property type="term" value="C:cytosolic large ribosomal subunit"/>
    <property type="evidence" value="ECO:0007005"/>
    <property type="project" value="TAIR"/>
</dbReference>
<dbReference type="GO" id="GO:0022626">
    <property type="term" value="C:cytosolic ribosome"/>
    <property type="evidence" value="ECO:0007005"/>
    <property type="project" value="TAIR"/>
</dbReference>
<dbReference type="GO" id="GO:0005730">
    <property type="term" value="C:nucleolus"/>
    <property type="evidence" value="ECO:0007005"/>
    <property type="project" value="TAIR"/>
</dbReference>
<dbReference type="GO" id="GO:0009505">
    <property type="term" value="C:plant-type cell wall"/>
    <property type="evidence" value="ECO:0007005"/>
    <property type="project" value="TAIR"/>
</dbReference>
<dbReference type="GO" id="GO:0009506">
    <property type="term" value="C:plasmodesma"/>
    <property type="evidence" value="ECO:0007005"/>
    <property type="project" value="TAIR"/>
</dbReference>
<dbReference type="GO" id="GO:0005773">
    <property type="term" value="C:vacuole"/>
    <property type="evidence" value="ECO:0007005"/>
    <property type="project" value="TAIR"/>
</dbReference>
<dbReference type="GO" id="GO:0003729">
    <property type="term" value="F:mRNA binding"/>
    <property type="evidence" value="ECO:0000314"/>
    <property type="project" value="TAIR"/>
</dbReference>
<dbReference type="GO" id="GO:0003735">
    <property type="term" value="F:structural constituent of ribosome"/>
    <property type="evidence" value="ECO:0000314"/>
    <property type="project" value="CAFA"/>
</dbReference>
<dbReference type="GO" id="GO:0006412">
    <property type="term" value="P:translation"/>
    <property type="evidence" value="ECO:0007669"/>
    <property type="project" value="InterPro"/>
</dbReference>
<dbReference type="FunFam" id="3.40.1370.10:FF:000002">
    <property type="entry name" value="60S ribosomal protein L4"/>
    <property type="match status" value="1"/>
</dbReference>
<dbReference type="Gene3D" id="3.40.1370.10">
    <property type="match status" value="1"/>
</dbReference>
<dbReference type="InterPro" id="IPR025755">
    <property type="entry name" value="Ribos_uL4_C_dom"/>
</dbReference>
<dbReference type="InterPro" id="IPR002136">
    <property type="entry name" value="Ribosomal_uL4"/>
</dbReference>
<dbReference type="InterPro" id="IPR023574">
    <property type="entry name" value="Ribosomal_uL4_dom_sf"/>
</dbReference>
<dbReference type="InterPro" id="IPR013000">
    <property type="entry name" value="Ribosomal_uL4_euk/arc_CS"/>
</dbReference>
<dbReference type="InterPro" id="IPR045240">
    <property type="entry name" value="Ribosomal_uL4_euk/arch"/>
</dbReference>
<dbReference type="PANTHER" id="PTHR19431">
    <property type="entry name" value="60S RIBOSOMAL PROTEIN L4"/>
    <property type="match status" value="1"/>
</dbReference>
<dbReference type="Pfam" id="PF14374">
    <property type="entry name" value="Ribos_L4_asso_C"/>
    <property type="match status" value="1"/>
</dbReference>
<dbReference type="Pfam" id="PF00573">
    <property type="entry name" value="Ribosomal_L4"/>
    <property type="match status" value="1"/>
</dbReference>
<dbReference type="SUPFAM" id="SSF52166">
    <property type="entry name" value="Ribosomal protein L4"/>
    <property type="match status" value="1"/>
</dbReference>
<dbReference type="PROSITE" id="PS00939">
    <property type="entry name" value="RIBOSOMAL_L1E"/>
    <property type="match status" value="1"/>
</dbReference>
<feature type="chain" id="PRO_0000129363" description="Large ribosomal subunit protein uL4z">
    <location>
        <begin position="1"/>
        <end position="406"/>
    </location>
</feature>
<feature type="region of interest" description="Disordered" evidence="1">
    <location>
        <begin position="56"/>
        <end position="95"/>
    </location>
</feature>
<name>RL4A_ARATH</name>
<comment type="alternative products">
    <event type="alternative splicing"/>
    <isoform>
        <id>Q9SF40-1</id>
        <name>1</name>
        <sequence type="displayed"/>
    </isoform>
    <text>A number of isoforms are produced. According to EST sequences.</text>
</comment>
<comment type="similarity">
    <text evidence="3">Belongs to the universal ribosomal protein uL4 family.</text>
</comment>